<name>PSBF_TRICV</name>
<proteinExistence type="inferred from homology"/>
<feature type="chain" id="PRO_0000200430" description="Cytochrome b559 subunit beta">
    <location>
        <begin position="1"/>
        <end position="43"/>
    </location>
</feature>
<feature type="transmembrane region" description="Helical" evidence="1">
    <location>
        <begin position="18"/>
        <end position="34"/>
    </location>
</feature>
<feature type="binding site" description="axial binding residue" evidence="1">
    <location>
        <position position="22"/>
    </location>
    <ligand>
        <name>heme</name>
        <dbReference type="ChEBI" id="CHEBI:30413"/>
        <note>ligand shared with alpha subunit</note>
    </ligand>
    <ligandPart>
        <name>Fe</name>
        <dbReference type="ChEBI" id="CHEBI:18248"/>
    </ligandPart>
</feature>
<keyword id="KW-0150">Chloroplast</keyword>
<keyword id="KW-0249">Electron transport</keyword>
<keyword id="KW-0349">Heme</keyword>
<keyword id="KW-0408">Iron</keyword>
<keyword id="KW-0472">Membrane</keyword>
<keyword id="KW-0479">Metal-binding</keyword>
<keyword id="KW-0602">Photosynthesis</keyword>
<keyword id="KW-0604">Photosystem II</keyword>
<keyword id="KW-0934">Plastid</keyword>
<keyword id="KW-0793">Thylakoid</keyword>
<keyword id="KW-0812">Transmembrane</keyword>
<keyword id="KW-1133">Transmembrane helix</keyword>
<keyword id="KW-0813">Transport</keyword>
<dbReference type="EMBL" id="Z67753">
    <property type="protein sequence ID" value="CAA91711.1"/>
    <property type="molecule type" value="Genomic_DNA"/>
</dbReference>
<dbReference type="PIR" id="S78338">
    <property type="entry name" value="S78338"/>
</dbReference>
<dbReference type="RefSeq" id="NP_043679.1">
    <property type="nucleotide sequence ID" value="NC_001713.1"/>
</dbReference>
<dbReference type="SMR" id="P49474"/>
<dbReference type="GeneID" id="801712"/>
<dbReference type="GO" id="GO:0009535">
    <property type="term" value="C:chloroplast thylakoid membrane"/>
    <property type="evidence" value="ECO:0007669"/>
    <property type="project" value="UniProtKB-SubCell"/>
</dbReference>
<dbReference type="GO" id="GO:0009539">
    <property type="term" value="C:photosystem II reaction center"/>
    <property type="evidence" value="ECO:0007669"/>
    <property type="project" value="InterPro"/>
</dbReference>
<dbReference type="GO" id="GO:0009055">
    <property type="term" value="F:electron transfer activity"/>
    <property type="evidence" value="ECO:0007669"/>
    <property type="project" value="UniProtKB-UniRule"/>
</dbReference>
<dbReference type="GO" id="GO:0020037">
    <property type="term" value="F:heme binding"/>
    <property type="evidence" value="ECO:0007669"/>
    <property type="project" value="InterPro"/>
</dbReference>
<dbReference type="GO" id="GO:0005506">
    <property type="term" value="F:iron ion binding"/>
    <property type="evidence" value="ECO:0007669"/>
    <property type="project" value="UniProtKB-UniRule"/>
</dbReference>
<dbReference type="GO" id="GO:0009767">
    <property type="term" value="P:photosynthetic electron transport chain"/>
    <property type="evidence" value="ECO:0007669"/>
    <property type="project" value="InterPro"/>
</dbReference>
<dbReference type="HAMAP" id="MF_00643">
    <property type="entry name" value="PSII_PsbF"/>
    <property type="match status" value="1"/>
</dbReference>
<dbReference type="InterPro" id="IPR006241">
    <property type="entry name" value="PSII_cyt_b559_bsu"/>
</dbReference>
<dbReference type="InterPro" id="IPR006216">
    <property type="entry name" value="PSII_cyt_b559_CS"/>
</dbReference>
<dbReference type="InterPro" id="IPR013081">
    <property type="entry name" value="PSII_cyt_b559_N"/>
</dbReference>
<dbReference type="NCBIfam" id="TIGR01333">
    <property type="entry name" value="cyt_b559_beta"/>
    <property type="match status" value="1"/>
</dbReference>
<dbReference type="Pfam" id="PF00283">
    <property type="entry name" value="Cytochrom_B559"/>
    <property type="match status" value="1"/>
</dbReference>
<dbReference type="PIRSF" id="PIRSF000037">
    <property type="entry name" value="PsbF"/>
    <property type="match status" value="1"/>
</dbReference>
<dbReference type="SUPFAM" id="SSF161045">
    <property type="entry name" value="Cytochrome b559 subunits"/>
    <property type="match status" value="1"/>
</dbReference>
<dbReference type="PROSITE" id="PS00537">
    <property type="entry name" value="CYTOCHROME_B559"/>
    <property type="match status" value="1"/>
</dbReference>
<sequence length="43" mass="4924">MTKNINQPVAYPIFTFRWLAIHGLAIPTVFFLGGITAMQFIQR</sequence>
<accession>P49474</accession>
<protein>
    <recommendedName>
        <fullName evidence="1">Cytochrome b559 subunit beta</fullName>
    </recommendedName>
    <alternativeName>
        <fullName evidence="1">PSII reaction center subunit VI</fullName>
    </alternativeName>
</protein>
<organism>
    <name type="scientific">Trieres chinensis</name>
    <name type="common">Marine centric diatom</name>
    <name type="synonym">Odontella sinensis</name>
    <dbReference type="NCBI Taxonomy" id="1514140"/>
    <lineage>
        <taxon>Eukaryota</taxon>
        <taxon>Sar</taxon>
        <taxon>Stramenopiles</taxon>
        <taxon>Ochrophyta</taxon>
        <taxon>Bacillariophyta</taxon>
        <taxon>Mediophyceae</taxon>
        <taxon>Biddulphiophycidae</taxon>
        <taxon>Eupodiscales</taxon>
        <taxon>Parodontellaceae</taxon>
        <taxon>Trieres</taxon>
    </lineage>
</organism>
<gene>
    <name evidence="1" type="primary">psbF</name>
</gene>
<reference key="1">
    <citation type="journal article" date="1995" name="Plant Mol. Biol. Rep.">
        <title>The chloroplast genome of a chlorophyll a+c-containing alga, Odontella sinensis.</title>
        <authorList>
            <person name="Kowallik K.V."/>
            <person name="Stoebe B."/>
            <person name="Schaffran I."/>
            <person name="Kroth-Pancic P."/>
            <person name="Freier U."/>
        </authorList>
    </citation>
    <scope>NUCLEOTIDE SEQUENCE [LARGE SCALE GENOMIC DNA]</scope>
</reference>
<evidence type="ECO:0000255" key="1">
    <source>
        <dbReference type="HAMAP-Rule" id="MF_00643"/>
    </source>
</evidence>
<geneLocation type="chloroplast"/>
<comment type="function">
    <text evidence="1">This b-type cytochrome is tightly associated with the reaction center of photosystem II (PSII). PSII is a light-driven water:plastoquinone oxidoreductase that uses light energy to abstract electrons from H(2)O, generating O(2) and a proton gradient subsequently used for ATP formation. It consists of a core antenna complex that captures photons, and an electron transfer chain that converts photonic excitation into a charge separation.</text>
</comment>
<comment type="cofactor">
    <cofactor evidence="1">
        <name>heme b</name>
        <dbReference type="ChEBI" id="CHEBI:60344"/>
    </cofactor>
    <text evidence="1">With its partner (PsbE) binds heme. PSII binds additional chlorophylls, carotenoids and specific lipids.</text>
</comment>
<comment type="subunit">
    <text evidence="1">Heterodimer of an alpha subunit and a beta subunit. PSII is composed of 1 copy each of membrane proteins PsbA, PsbB, PsbC, PsbD, PsbE, PsbF, PsbH, PsbI, PsbJ, PsbK, PsbL, PsbM, PsbT, PsbX, PsbY, PsbZ, Psb30/Ycf12, at least 3 peripheral proteins of the oxygen-evolving complex and a large number of cofactors. It forms dimeric complexes.</text>
</comment>
<comment type="subcellular location">
    <subcellularLocation>
        <location evidence="1">Plastid</location>
        <location evidence="1">Chloroplast thylakoid membrane</location>
        <topology evidence="1">Single-pass membrane protein</topology>
    </subcellularLocation>
</comment>
<comment type="similarity">
    <text evidence="1">Belongs to the PsbE/PsbF family.</text>
</comment>